<sequence>MSLSPCRARRGFSARSACSAQSVGRGRTGFSSRSLSSFGGCRGGSRGRTWGSWGRLGVRLGEGSGGPGLSLCPPGGIQQVTINQSLLIPPKIEIDPQFQVVRTQETQQIRVLNNQFASFIDKVRFLEQQNKVLETKWHLLQQQGLSDRPQGLESFFEAYLVRLRTQLEELQKKRGSLDAELKSCQGQEEEYKAKYEHEANRRATLENDFVVLKKDADGVLLSKMEMESKVEDLKEYICFLKHLYEEELGQLQTQASDMSVVLSMDNNRCLDFRDLIAEVRARYEEIARTSKAEAEMLYQTKYRELQACAQLHGNSMKETKVQITQLQQTIKKLQSQIETVKSQNASLQVAIADAEQRGELALKDAQTKLAELEAALRTAKQDIARLLHDYQELMSVKLSLDIEIATYRRLLEGEECRMSGECASQVTISVGGGSTVVSGGADGGLAGTCGLGGVKGSFGSRCSSVVKGGSSIVKGGSSVVIGGSSIILGSEQGPAVGSGSVSGSSSSSTSHTILKKTVESSLKTSVTY</sequence>
<comment type="subunit">
    <text>Heterotetramer of two type I and two type II keratins.</text>
</comment>
<comment type="miscellaneous">
    <text>There are two types of cytoskeletal and microfibrillar keratin, I (acidic) and II (neutral to basic) (40-55 and 56-70 kDa, respectively).</text>
</comment>
<comment type="similarity">
    <text evidence="1">Belongs to the intermediate filament family.</text>
</comment>
<accession>A6QNX5</accession>
<keyword id="KW-0175">Coiled coil</keyword>
<keyword id="KW-0403">Intermediate filament</keyword>
<keyword id="KW-0416">Keratin</keyword>
<keyword id="KW-1185">Reference proteome</keyword>
<protein>
    <recommendedName>
        <fullName>Keratin, type II cytoskeletal 78</fullName>
    </recommendedName>
    <alternativeName>
        <fullName>Cytokeratin-78</fullName>
        <shortName>CK-78</shortName>
    </alternativeName>
    <alternativeName>
        <fullName>Keratin-78</fullName>
        <shortName>K78</shortName>
    </alternativeName>
    <alternativeName>
        <fullName>Type-II keratin Kb40</fullName>
    </alternativeName>
</protein>
<dbReference type="EMBL" id="BC149049">
    <property type="protein sequence ID" value="AAI49050.1"/>
    <property type="molecule type" value="mRNA"/>
</dbReference>
<dbReference type="RefSeq" id="NP_001095547.1">
    <property type="nucleotide sequence ID" value="NM_001102077.1"/>
</dbReference>
<dbReference type="SMR" id="A6QNX5"/>
<dbReference type="FunCoup" id="A6QNX5">
    <property type="interactions" value="18"/>
</dbReference>
<dbReference type="STRING" id="9913.ENSBTAP00000000815"/>
<dbReference type="PaxDb" id="9913-ENSBTAP00000000815"/>
<dbReference type="PeptideAtlas" id="A6QNX5"/>
<dbReference type="GeneID" id="523221"/>
<dbReference type="KEGG" id="bta:523221"/>
<dbReference type="CTD" id="196374"/>
<dbReference type="VEuPathDB" id="HostDB:ENSBTAG00000039967"/>
<dbReference type="eggNOG" id="ENOG502SPJX">
    <property type="taxonomic scope" value="Eukaryota"/>
</dbReference>
<dbReference type="HOGENOM" id="CLU_012560_6_1_1"/>
<dbReference type="InParanoid" id="A6QNX5"/>
<dbReference type="OMA" id="ETQQIRT"/>
<dbReference type="OrthoDB" id="9450571at2759"/>
<dbReference type="TreeFam" id="TF317854"/>
<dbReference type="Reactome" id="R-BTA-6805567">
    <property type="pathway name" value="Keratinization"/>
</dbReference>
<dbReference type="Reactome" id="R-BTA-6809371">
    <property type="pathway name" value="Formation of the cornified envelope"/>
</dbReference>
<dbReference type="Proteomes" id="UP000009136">
    <property type="component" value="Chromosome 5"/>
</dbReference>
<dbReference type="Bgee" id="ENSBTAG00000039967">
    <property type="expression patterns" value="Expressed in esophagus and 37 other cell types or tissues"/>
</dbReference>
<dbReference type="GO" id="GO:0045095">
    <property type="term" value="C:keratin filament"/>
    <property type="evidence" value="ECO:0000318"/>
    <property type="project" value="GO_Central"/>
</dbReference>
<dbReference type="GO" id="GO:0030280">
    <property type="term" value="F:structural constituent of skin epidermis"/>
    <property type="evidence" value="ECO:0000318"/>
    <property type="project" value="GO_Central"/>
</dbReference>
<dbReference type="GO" id="GO:0045109">
    <property type="term" value="P:intermediate filament organization"/>
    <property type="evidence" value="ECO:0000318"/>
    <property type="project" value="GO_Central"/>
</dbReference>
<dbReference type="GO" id="GO:0031424">
    <property type="term" value="P:keratinization"/>
    <property type="evidence" value="ECO:0000318"/>
    <property type="project" value="GO_Central"/>
</dbReference>
<dbReference type="FunFam" id="1.20.5.1160:FF:000001">
    <property type="entry name" value="Keratin type II"/>
    <property type="match status" value="1"/>
</dbReference>
<dbReference type="FunFam" id="1.20.5.170:FF:000004">
    <property type="entry name" value="Keratin, type II cytoskeletal 5"/>
    <property type="match status" value="1"/>
</dbReference>
<dbReference type="Gene3D" id="1.20.5.170">
    <property type="match status" value="1"/>
</dbReference>
<dbReference type="Gene3D" id="1.20.5.500">
    <property type="entry name" value="Single helix bin"/>
    <property type="match status" value="1"/>
</dbReference>
<dbReference type="Gene3D" id="1.20.5.1160">
    <property type="entry name" value="Vasodilator-stimulated phosphoprotein"/>
    <property type="match status" value="1"/>
</dbReference>
<dbReference type="InterPro" id="IPR018039">
    <property type="entry name" value="IF_conserved"/>
</dbReference>
<dbReference type="InterPro" id="IPR039008">
    <property type="entry name" value="IF_rod_dom"/>
</dbReference>
<dbReference type="InterPro" id="IPR032444">
    <property type="entry name" value="Keratin_2_head"/>
</dbReference>
<dbReference type="InterPro" id="IPR003054">
    <property type="entry name" value="Keratin_II"/>
</dbReference>
<dbReference type="PANTHER" id="PTHR45616">
    <property type="entry name" value="GATA-TYPE DOMAIN-CONTAINING PROTEIN"/>
    <property type="match status" value="1"/>
</dbReference>
<dbReference type="PANTHER" id="PTHR45616:SF18">
    <property type="entry name" value="KERATIN, TYPE II CYTOSKELETAL 78"/>
    <property type="match status" value="1"/>
</dbReference>
<dbReference type="Pfam" id="PF00038">
    <property type="entry name" value="Filament"/>
    <property type="match status" value="1"/>
</dbReference>
<dbReference type="Pfam" id="PF16208">
    <property type="entry name" value="Keratin_2_head"/>
    <property type="match status" value="1"/>
</dbReference>
<dbReference type="PRINTS" id="PR01276">
    <property type="entry name" value="TYPE2KERATIN"/>
</dbReference>
<dbReference type="SMART" id="SM01391">
    <property type="entry name" value="Filament"/>
    <property type="match status" value="1"/>
</dbReference>
<dbReference type="SUPFAM" id="SSF64593">
    <property type="entry name" value="Intermediate filament protein, coiled coil region"/>
    <property type="match status" value="3"/>
</dbReference>
<dbReference type="PROSITE" id="PS00226">
    <property type="entry name" value="IF_ROD_1"/>
    <property type="match status" value="1"/>
</dbReference>
<dbReference type="PROSITE" id="PS51842">
    <property type="entry name" value="IF_ROD_2"/>
    <property type="match status" value="1"/>
</dbReference>
<proteinExistence type="evidence at transcript level"/>
<feature type="chain" id="PRO_0000314890" description="Keratin, type II cytoskeletal 78">
    <location>
        <begin position="1"/>
        <end position="528"/>
    </location>
</feature>
<feature type="domain" description="IF rod" evidence="1">
    <location>
        <begin position="105"/>
        <end position="418"/>
    </location>
</feature>
<feature type="region of interest" description="Head">
    <location>
        <begin position="1"/>
        <end position="104"/>
    </location>
</feature>
<feature type="region of interest" description="Disordered" evidence="2">
    <location>
        <begin position="23"/>
        <end position="45"/>
    </location>
</feature>
<feature type="region of interest" description="Coil 1A">
    <location>
        <begin position="105"/>
        <end position="140"/>
    </location>
</feature>
<feature type="region of interest" description="Linker 1">
    <location>
        <begin position="141"/>
        <end position="159"/>
    </location>
</feature>
<feature type="region of interest" description="Coil 1B">
    <location>
        <begin position="160"/>
        <end position="252"/>
    </location>
</feature>
<feature type="region of interest" description="Linker 12">
    <location>
        <begin position="253"/>
        <end position="275"/>
    </location>
</feature>
<feature type="region of interest" description="Coil 2">
    <location>
        <begin position="276"/>
        <end position="415"/>
    </location>
</feature>
<feature type="region of interest" description="Tail">
    <location>
        <begin position="416"/>
        <end position="528"/>
    </location>
</feature>
<feature type="compositionally biased region" description="Low complexity" evidence="2">
    <location>
        <begin position="24"/>
        <end position="39"/>
    </location>
</feature>
<feature type="site" description="Stutter">
    <location>
        <position position="356"/>
    </location>
</feature>
<name>K2C78_BOVIN</name>
<evidence type="ECO:0000255" key="1">
    <source>
        <dbReference type="PROSITE-ProRule" id="PRU01188"/>
    </source>
</evidence>
<evidence type="ECO:0000256" key="2">
    <source>
        <dbReference type="SAM" id="MobiDB-lite"/>
    </source>
</evidence>
<gene>
    <name type="primary">KRT78</name>
</gene>
<organism>
    <name type="scientific">Bos taurus</name>
    <name type="common">Bovine</name>
    <dbReference type="NCBI Taxonomy" id="9913"/>
    <lineage>
        <taxon>Eukaryota</taxon>
        <taxon>Metazoa</taxon>
        <taxon>Chordata</taxon>
        <taxon>Craniata</taxon>
        <taxon>Vertebrata</taxon>
        <taxon>Euteleostomi</taxon>
        <taxon>Mammalia</taxon>
        <taxon>Eutheria</taxon>
        <taxon>Laurasiatheria</taxon>
        <taxon>Artiodactyla</taxon>
        <taxon>Ruminantia</taxon>
        <taxon>Pecora</taxon>
        <taxon>Bovidae</taxon>
        <taxon>Bovinae</taxon>
        <taxon>Bos</taxon>
    </lineage>
</organism>
<reference key="1">
    <citation type="submission" date="2007-07" db="EMBL/GenBank/DDBJ databases">
        <authorList>
            <consortium name="NIH - Mammalian Gene Collection (MGC) project"/>
        </authorList>
    </citation>
    <scope>NUCLEOTIDE SEQUENCE [LARGE SCALE MRNA]</scope>
    <source>
        <strain>Hereford</strain>
        <tissue>Fetal skin</tissue>
    </source>
</reference>